<reference key="1">
    <citation type="journal article" date="2005" name="Nature">
        <title>The map-based sequence of the rice genome.</title>
        <authorList>
            <consortium name="International rice genome sequencing project (IRGSP)"/>
        </authorList>
    </citation>
    <scope>NUCLEOTIDE SEQUENCE [LARGE SCALE GENOMIC DNA]</scope>
    <source>
        <strain>cv. Nipponbare</strain>
    </source>
</reference>
<reference key="2">
    <citation type="journal article" date="2008" name="Nucleic Acids Res.">
        <title>The rice annotation project database (RAP-DB): 2008 update.</title>
        <authorList>
            <consortium name="The rice annotation project (RAP)"/>
        </authorList>
    </citation>
    <scope>GENOME REANNOTATION</scope>
    <source>
        <strain>cv. Nipponbare</strain>
    </source>
</reference>
<reference key="3">
    <citation type="journal article" date="2013" name="Rice">
        <title>Improvement of the Oryza sativa Nipponbare reference genome using next generation sequence and optical map data.</title>
        <authorList>
            <person name="Kawahara Y."/>
            <person name="de la Bastide M."/>
            <person name="Hamilton J.P."/>
            <person name="Kanamori H."/>
            <person name="McCombie W.R."/>
            <person name="Ouyang S."/>
            <person name="Schwartz D.C."/>
            <person name="Tanaka T."/>
            <person name="Wu J."/>
            <person name="Zhou S."/>
            <person name="Childs K.L."/>
            <person name="Davidson R.M."/>
            <person name="Lin H."/>
            <person name="Quesada-Ocampo L."/>
            <person name="Vaillancourt B."/>
            <person name="Sakai H."/>
            <person name="Lee S.S."/>
            <person name="Kim J."/>
            <person name="Numa H."/>
            <person name="Itoh T."/>
            <person name="Buell C.R."/>
            <person name="Matsumoto T."/>
        </authorList>
    </citation>
    <scope>GENOME REANNOTATION</scope>
    <source>
        <strain>cv. Nipponbare</strain>
    </source>
</reference>
<reference key="4">
    <citation type="journal article" date="2005" name="PLoS Biol.">
        <title>The genomes of Oryza sativa: a history of duplications.</title>
        <authorList>
            <person name="Yu J."/>
            <person name="Wang J."/>
            <person name="Lin W."/>
            <person name="Li S."/>
            <person name="Li H."/>
            <person name="Zhou J."/>
            <person name="Ni P."/>
            <person name="Dong W."/>
            <person name="Hu S."/>
            <person name="Zeng C."/>
            <person name="Zhang J."/>
            <person name="Zhang Y."/>
            <person name="Li R."/>
            <person name="Xu Z."/>
            <person name="Li S."/>
            <person name="Li X."/>
            <person name="Zheng H."/>
            <person name="Cong L."/>
            <person name="Lin L."/>
            <person name="Yin J."/>
            <person name="Geng J."/>
            <person name="Li G."/>
            <person name="Shi J."/>
            <person name="Liu J."/>
            <person name="Lv H."/>
            <person name="Li J."/>
            <person name="Wang J."/>
            <person name="Deng Y."/>
            <person name="Ran L."/>
            <person name="Shi X."/>
            <person name="Wang X."/>
            <person name="Wu Q."/>
            <person name="Li C."/>
            <person name="Ren X."/>
            <person name="Wang J."/>
            <person name="Wang X."/>
            <person name="Li D."/>
            <person name="Liu D."/>
            <person name="Zhang X."/>
            <person name="Ji Z."/>
            <person name="Zhao W."/>
            <person name="Sun Y."/>
            <person name="Zhang Z."/>
            <person name="Bao J."/>
            <person name="Han Y."/>
            <person name="Dong L."/>
            <person name="Ji J."/>
            <person name="Chen P."/>
            <person name="Wu S."/>
            <person name="Liu J."/>
            <person name="Xiao Y."/>
            <person name="Bu D."/>
            <person name="Tan J."/>
            <person name="Yang L."/>
            <person name="Ye C."/>
            <person name="Zhang J."/>
            <person name="Xu J."/>
            <person name="Zhou Y."/>
            <person name="Yu Y."/>
            <person name="Zhang B."/>
            <person name="Zhuang S."/>
            <person name="Wei H."/>
            <person name="Liu B."/>
            <person name="Lei M."/>
            <person name="Yu H."/>
            <person name="Li Y."/>
            <person name="Xu H."/>
            <person name="Wei S."/>
            <person name="He X."/>
            <person name="Fang L."/>
            <person name="Zhang Z."/>
            <person name="Zhang Y."/>
            <person name="Huang X."/>
            <person name="Su Z."/>
            <person name="Tong W."/>
            <person name="Li J."/>
            <person name="Tong Z."/>
            <person name="Li S."/>
            <person name="Ye J."/>
            <person name="Wang L."/>
            <person name="Fang L."/>
            <person name="Lei T."/>
            <person name="Chen C.-S."/>
            <person name="Chen H.-C."/>
            <person name="Xu Z."/>
            <person name="Li H."/>
            <person name="Huang H."/>
            <person name="Zhang F."/>
            <person name="Xu H."/>
            <person name="Li N."/>
            <person name="Zhao C."/>
            <person name="Li S."/>
            <person name="Dong L."/>
            <person name="Huang Y."/>
            <person name="Li L."/>
            <person name="Xi Y."/>
            <person name="Qi Q."/>
            <person name="Li W."/>
            <person name="Zhang B."/>
            <person name="Hu W."/>
            <person name="Zhang Y."/>
            <person name="Tian X."/>
            <person name="Jiao Y."/>
            <person name="Liang X."/>
            <person name="Jin J."/>
            <person name="Gao L."/>
            <person name="Zheng W."/>
            <person name="Hao B."/>
            <person name="Liu S.-M."/>
            <person name="Wang W."/>
            <person name="Yuan L."/>
            <person name="Cao M."/>
            <person name="McDermott J."/>
            <person name="Samudrala R."/>
            <person name="Wang J."/>
            <person name="Wong G.K.-S."/>
            <person name="Yang H."/>
        </authorList>
    </citation>
    <scope>NUCLEOTIDE SEQUENCE [LARGE SCALE GENOMIC DNA]</scope>
    <source>
        <strain>cv. Nipponbare</strain>
    </source>
</reference>
<reference key="5">
    <citation type="journal article" date="2003" name="Science">
        <title>Collection, mapping, and annotation of over 28,000 cDNA clones from japonica rice.</title>
        <authorList>
            <consortium name="The rice full-length cDNA consortium"/>
        </authorList>
    </citation>
    <scope>NUCLEOTIDE SEQUENCE [LARGE SCALE MRNA]</scope>
    <source>
        <strain>cv. Nipponbare</strain>
    </source>
</reference>
<reference key="6">
    <citation type="journal article" date="2008" name="Planta">
        <title>OsCYT-INV1 for alkaline/neutral invertase is involved in root cell development and reproductivity in rice (Oryza sativa L.).</title>
        <authorList>
            <person name="Jia L."/>
            <person name="Zhang B."/>
            <person name="Mao C."/>
            <person name="Li J."/>
            <person name="Wu Y."/>
            <person name="Wu P."/>
            <person name="Wu Z."/>
        </authorList>
    </citation>
    <scope>FUNCTION</scope>
    <scope>CATALYTIC ACTIVITY</scope>
    <scope>TISSUE SPECIFICITY</scope>
    <scope>MUTAGENESIS OF GLY-205</scope>
</reference>
<proteinExistence type="evidence at protein level"/>
<feature type="chain" id="PRO_0000431504" description="Cytosolic invertase 1">
    <location>
        <begin position="1"/>
        <end position="562"/>
    </location>
</feature>
<feature type="mutagenesis site" description="Short root, delayed flowering, and partial sterility.; increased sucrose accumulation and reduction of hexose levels." evidence="2">
    <original>G</original>
    <variation>R</variation>
    <location>
        <position position="205"/>
    </location>
</feature>
<accession>Q69T31</accession>
<accession>A0A0P0VKC8</accession>
<protein>
    <recommendedName>
        <fullName evidence="3">Cytosolic invertase 1</fullName>
        <shortName evidence="3">OsCYT-INV1</shortName>
        <ecNumber evidence="2">3.2.1.26</ecNumber>
    </recommendedName>
</protein>
<name>CINV1_ORYSJ</name>
<comment type="function">
    <text evidence="2">Cytosolic invertase that cleaves sucrose into glucose and fructose and is involved in the regulation of primary root elongation, lateral root formation, floral transition and pollen development.</text>
</comment>
<comment type="catalytic activity">
    <reaction evidence="2">
        <text>Hydrolysis of terminal non-reducing beta-D-fructofuranoside residues in beta-D-fructofuranosides.</text>
        <dbReference type="EC" id="3.2.1.26"/>
    </reaction>
</comment>
<comment type="subcellular location">
    <subcellularLocation>
        <location evidence="1">Cytoplasm</location>
        <location evidence="1">Cytosol</location>
    </subcellularLocation>
</comment>
<comment type="similarity">
    <text evidence="4">Belongs to the glycosyl hydrolase 100 family.</text>
</comment>
<sequence>MELAVGAGGMRRSASHTSLSESDDFDLSRLLNKPRINVERQRSFDDRSLSDVSYSGGGHGGTRGGFDGMYSPGGGLRSLVGTPASSALHSFEPHPIVGDAWEALRRSLVFFRGQPLGTIAAFDHASEEVLNYDQVFVRDFVPSALAFLMNGEPEIVRHFLLKTLLLQGWEKKVDRFKLGEGAMPASFKVLHDSKKGVDTLHADFGESAIGRVAPVDSGFWWIILLRAYTKSTGDLTLAETPECQKGMRLILSLCLSEGFDTFPTLLCADGCCMIDRRMGVYGYPIEIQALFFMALRCALQLLKHDNEGKEFVERIATRLHALSYHMRSYYWLDFQQLNDIYRYKTEEYSHTAVNKFNVIPDSIPDWLFDFMPCQGGFFIGNVSPARMDFRWFALGNMIAILSSLATPEQSTAIMDLIEERWEELIGEMPLKICYPAIENHEWRIVTGCDPKNTRWSYHNGGSWPVLLWLLTAACIKTGRPQIARRAIDLAERRLLKDGWPEYYDGKLGRYVGKQARKFQTWSIAGYLVAKMMLEDPSHLGMISLEEDKAMKPVLKRSASWTN</sequence>
<gene>
    <name evidence="4" type="primary">CINV1</name>
    <name evidence="6" type="ordered locus">Os02g0550600</name>
    <name evidence="4" type="ordered locus">LOC_Os02g34560</name>
    <name evidence="7" type="ORF">OsJ_07095</name>
    <name evidence="5" type="ORF">P0451A10.27</name>
</gene>
<evidence type="ECO:0000250" key="1">
    <source>
        <dbReference type="UniProtKB" id="Q9LQF2"/>
    </source>
</evidence>
<evidence type="ECO:0000269" key="2">
    <source>
    </source>
</evidence>
<evidence type="ECO:0000303" key="3">
    <source>
    </source>
</evidence>
<evidence type="ECO:0000305" key="4"/>
<evidence type="ECO:0000312" key="5">
    <source>
        <dbReference type="EMBL" id="BAD33266.1"/>
    </source>
</evidence>
<evidence type="ECO:0000312" key="6">
    <source>
        <dbReference type="EMBL" id="BAF09009.1"/>
    </source>
</evidence>
<evidence type="ECO:0000312" key="7">
    <source>
        <dbReference type="EMBL" id="EAZ23402.1"/>
    </source>
</evidence>
<dbReference type="EC" id="3.2.1.26" evidence="2"/>
<dbReference type="EMBL" id="AP004775">
    <property type="protein sequence ID" value="BAD33266.1"/>
    <property type="molecule type" value="Genomic_DNA"/>
</dbReference>
<dbReference type="EMBL" id="AP008208">
    <property type="protein sequence ID" value="BAF09009.1"/>
    <property type="molecule type" value="Genomic_DNA"/>
</dbReference>
<dbReference type="EMBL" id="AP014958">
    <property type="protein sequence ID" value="BAS79160.1"/>
    <property type="molecule type" value="Genomic_DNA"/>
</dbReference>
<dbReference type="EMBL" id="CM000139">
    <property type="protein sequence ID" value="EAZ23402.1"/>
    <property type="molecule type" value="Genomic_DNA"/>
</dbReference>
<dbReference type="EMBL" id="AK102741">
    <property type="protein sequence ID" value="BAG95698.1"/>
    <property type="molecule type" value="mRNA"/>
</dbReference>
<dbReference type="RefSeq" id="XP_015625957.1">
    <property type="nucleotide sequence ID" value="XM_015770471.1"/>
</dbReference>
<dbReference type="SMR" id="Q69T31"/>
<dbReference type="FunCoup" id="Q69T31">
    <property type="interactions" value="710"/>
</dbReference>
<dbReference type="STRING" id="39947.Q69T31"/>
<dbReference type="CAZy" id="GH100">
    <property type="family name" value="Glycoside Hydrolase Family 100"/>
</dbReference>
<dbReference type="iPTMnet" id="Q69T31"/>
<dbReference type="PaxDb" id="39947-Q69T31"/>
<dbReference type="EnsemblPlants" id="Os02t0550600-01">
    <property type="protein sequence ID" value="Os02t0550600-01"/>
    <property type="gene ID" value="Os02g0550600"/>
</dbReference>
<dbReference type="Gramene" id="Os02t0550600-01">
    <property type="protein sequence ID" value="Os02t0550600-01"/>
    <property type="gene ID" value="Os02g0550600"/>
</dbReference>
<dbReference type="KEGG" id="dosa:Os02g0550600"/>
<dbReference type="eggNOG" id="ENOG502QPS0">
    <property type="taxonomic scope" value="Eukaryota"/>
</dbReference>
<dbReference type="HOGENOM" id="CLU_020846_1_1_1"/>
<dbReference type="InParanoid" id="Q69T31"/>
<dbReference type="OMA" id="MDVWGAP"/>
<dbReference type="OrthoDB" id="585877at2759"/>
<dbReference type="PlantReactome" id="R-OSA-9030654">
    <property type="pathway name" value="Primary root development"/>
</dbReference>
<dbReference type="Proteomes" id="UP000000763">
    <property type="component" value="Chromosome 2"/>
</dbReference>
<dbReference type="Proteomes" id="UP000007752">
    <property type="component" value="Chromosome 2"/>
</dbReference>
<dbReference type="Proteomes" id="UP000059680">
    <property type="component" value="Chromosome 2"/>
</dbReference>
<dbReference type="GO" id="GO:0005829">
    <property type="term" value="C:cytosol"/>
    <property type="evidence" value="ECO:0007669"/>
    <property type="project" value="UniProtKB-SubCell"/>
</dbReference>
<dbReference type="GO" id="GO:0033926">
    <property type="term" value="F:endo-alpha-N-acetylgalactosaminidase activity"/>
    <property type="evidence" value="ECO:0007669"/>
    <property type="project" value="InterPro"/>
</dbReference>
<dbReference type="GO" id="GO:0004575">
    <property type="term" value="F:sucrose alpha-glucosidase activity"/>
    <property type="evidence" value="ECO:0000315"/>
    <property type="project" value="UniProtKB"/>
</dbReference>
<dbReference type="GO" id="GO:0010311">
    <property type="term" value="P:lateral root formation"/>
    <property type="evidence" value="ECO:0000315"/>
    <property type="project" value="UniProtKB"/>
</dbReference>
<dbReference type="GO" id="GO:0009555">
    <property type="term" value="P:pollen development"/>
    <property type="evidence" value="ECO:0000315"/>
    <property type="project" value="UniProtKB"/>
</dbReference>
<dbReference type="GO" id="GO:0080022">
    <property type="term" value="P:primary root development"/>
    <property type="evidence" value="ECO:0000315"/>
    <property type="project" value="UniProtKB"/>
</dbReference>
<dbReference type="GO" id="GO:0048510">
    <property type="term" value="P:regulation of timing of transition from vegetative to reproductive phase"/>
    <property type="evidence" value="ECO:0000315"/>
    <property type="project" value="UniProtKB"/>
</dbReference>
<dbReference type="GO" id="GO:0005987">
    <property type="term" value="P:sucrose catabolic process"/>
    <property type="evidence" value="ECO:0000315"/>
    <property type="project" value="UniProtKB"/>
</dbReference>
<dbReference type="FunFam" id="1.50.10.10:FF:000001">
    <property type="entry name" value="probable alkaline/neutral invertase B"/>
    <property type="match status" value="1"/>
</dbReference>
<dbReference type="Gene3D" id="1.50.10.10">
    <property type="match status" value="1"/>
</dbReference>
<dbReference type="InterPro" id="IPR008928">
    <property type="entry name" value="6-hairpin_glycosidase_sf"/>
</dbReference>
<dbReference type="InterPro" id="IPR012341">
    <property type="entry name" value="6hp_glycosidase-like_sf"/>
</dbReference>
<dbReference type="InterPro" id="IPR024746">
    <property type="entry name" value="Glyco_hydro_100"/>
</dbReference>
<dbReference type="PANTHER" id="PTHR31916">
    <property type="match status" value="1"/>
</dbReference>
<dbReference type="PANTHER" id="PTHR31916:SF59">
    <property type="entry name" value="CYTOSOLIC INVERTASE 1"/>
    <property type="match status" value="1"/>
</dbReference>
<dbReference type="Pfam" id="PF12899">
    <property type="entry name" value="Glyco_hydro_100"/>
    <property type="match status" value="1"/>
</dbReference>
<dbReference type="SUPFAM" id="SSF48208">
    <property type="entry name" value="Six-hairpin glycosidases"/>
    <property type="match status" value="1"/>
</dbReference>
<organism>
    <name type="scientific">Oryza sativa subsp. japonica</name>
    <name type="common">Rice</name>
    <dbReference type="NCBI Taxonomy" id="39947"/>
    <lineage>
        <taxon>Eukaryota</taxon>
        <taxon>Viridiplantae</taxon>
        <taxon>Streptophyta</taxon>
        <taxon>Embryophyta</taxon>
        <taxon>Tracheophyta</taxon>
        <taxon>Spermatophyta</taxon>
        <taxon>Magnoliopsida</taxon>
        <taxon>Liliopsida</taxon>
        <taxon>Poales</taxon>
        <taxon>Poaceae</taxon>
        <taxon>BOP clade</taxon>
        <taxon>Oryzoideae</taxon>
        <taxon>Oryzeae</taxon>
        <taxon>Oryzinae</taxon>
        <taxon>Oryza</taxon>
        <taxon>Oryza sativa</taxon>
    </lineage>
</organism>
<keyword id="KW-0119">Carbohydrate metabolism</keyword>
<keyword id="KW-0963">Cytoplasm</keyword>
<keyword id="KW-0326">Glycosidase</keyword>
<keyword id="KW-0378">Hydrolase</keyword>
<keyword id="KW-1185">Reference proteome</keyword>